<dbReference type="EC" id="5.1.3.20" evidence="1"/>
<dbReference type="EMBL" id="FM200053">
    <property type="protein sequence ID" value="CAR61591.1"/>
    <property type="molecule type" value="Genomic_DNA"/>
</dbReference>
<dbReference type="SMR" id="B5BHZ3"/>
<dbReference type="KEGG" id="sek:SSPA3325"/>
<dbReference type="HOGENOM" id="CLU_007383_1_3_6"/>
<dbReference type="UniPathway" id="UPA00356">
    <property type="reaction ID" value="UER00440"/>
</dbReference>
<dbReference type="Proteomes" id="UP000001869">
    <property type="component" value="Chromosome"/>
</dbReference>
<dbReference type="GO" id="GO:0008712">
    <property type="term" value="F:ADP-glyceromanno-heptose 6-epimerase activity"/>
    <property type="evidence" value="ECO:0007669"/>
    <property type="project" value="UniProtKB-UniRule"/>
</dbReference>
<dbReference type="GO" id="GO:0050661">
    <property type="term" value="F:NADP binding"/>
    <property type="evidence" value="ECO:0007669"/>
    <property type="project" value="InterPro"/>
</dbReference>
<dbReference type="GO" id="GO:0097171">
    <property type="term" value="P:ADP-L-glycero-beta-D-manno-heptose biosynthetic process"/>
    <property type="evidence" value="ECO:0007669"/>
    <property type="project" value="UniProtKB-UniPathway"/>
</dbReference>
<dbReference type="GO" id="GO:0005975">
    <property type="term" value="P:carbohydrate metabolic process"/>
    <property type="evidence" value="ECO:0007669"/>
    <property type="project" value="UniProtKB-UniRule"/>
</dbReference>
<dbReference type="CDD" id="cd05248">
    <property type="entry name" value="ADP_GME_SDR_e"/>
    <property type="match status" value="1"/>
</dbReference>
<dbReference type="Gene3D" id="3.40.50.720">
    <property type="entry name" value="NAD(P)-binding Rossmann-like Domain"/>
    <property type="match status" value="1"/>
</dbReference>
<dbReference type="Gene3D" id="3.90.25.10">
    <property type="entry name" value="UDP-galactose 4-epimerase, domain 1"/>
    <property type="match status" value="1"/>
</dbReference>
<dbReference type="HAMAP" id="MF_01601">
    <property type="entry name" value="Heptose_epimerase"/>
    <property type="match status" value="1"/>
</dbReference>
<dbReference type="InterPro" id="IPR001509">
    <property type="entry name" value="Epimerase_deHydtase"/>
</dbReference>
<dbReference type="InterPro" id="IPR011912">
    <property type="entry name" value="Heptose_epim"/>
</dbReference>
<dbReference type="InterPro" id="IPR036291">
    <property type="entry name" value="NAD(P)-bd_dom_sf"/>
</dbReference>
<dbReference type="NCBIfam" id="TIGR02197">
    <property type="entry name" value="heptose_epim"/>
    <property type="match status" value="1"/>
</dbReference>
<dbReference type="NCBIfam" id="NF008360">
    <property type="entry name" value="PRK11150.1"/>
    <property type="match status" value="1"/>
</dbReference>
<dbReference type="PANTHER" id="PTHR43103:SF3">
    <property type="entry name" value="ADP-L-GLYCERO-D-MANNO-HEPTOSE-6-EPIMERASE"/>
    <property type="match status" value="1"/>
</dbReference>
<dbReference type="PANTHER" id="PTHR43103">
    <property type="entry name" value="NUCLEOSIDE-DIPHOSPHATE-SUGAR EPIMERASE"/>
    <property type="match status" value="1"/>
</dbReference>
<dbReference type="Pfam" id="PF01370">
    <property type="entry name" value="Epimerase"/>
    <property type="match status" value="1"/>
</dbReference>
<dbReference type="SUPFAM" id="SSF51735">
    <property type="entry name" value="NAD(P)-binding Rossmann-fold domains"/>
    <property type="match status" value="1"/>
</dbReference>
<sequence length="310" mass="34849">MIIVTGGAGFIGSNIVKALNDKGITDILVVDNLKDGTKFVNLVDLNIADYMDKEDFLIQIMSGEELGDIEAIFHEGACSSTTEWDGKYMMDNNYQYSKELLHYCLEREIPFLYASSAATYGGRTSDFIESREYEKPLNVYGYSKFLFDEYVRQILPEANSQIVGFRYFNVYGPREGHKGSMASVAFHLNTQLNNGESPKLFEGSENFKRDFVYVGDVAAVNLWFLESGKSGIFNLGTGRAESFQAVADATLAYHKKGSIEYIPFPDKLKGRYQAFTQADLTNLRNAGYDKPFKTVAEGVTEYMAWLNRDA</sequence>
<accession>B5BHZ3</accession>
<evidence type="ECO:0000255" key="1">
    <source>
        <dbReference type="HAMAP-Rule" id="MF_01601"/>
    </source>
</evidence>
<organism>
    <name type="scientific">Salmonella paratyphi A (strain AKU_12601)</name>
    <dbReference type="NCBI Taxonomy" id="554290"/>
    <lineage>
        <taxon>Bacteria</taxon>
        <taxon>Pseudomonadati</taxon>
        <taxon>Pseudomonadota</taxon>
        <taxon>Gammaproteobacteria</taxon>
        <taxon>Enterobacterales</taxon>
        <taxon>Enterobacteriaceae</taxon>
        <taxon>Salmonella</taxon>
    </lineage>
</organism>
<feature type="chain" id="PRO_1000148093" description="ADP-L-glycero-D-manno-heptose-6-epimerase">
    <location>
        <begin position="1"/>
        <end position="310"/>
    </location>
</feature>
<feature type="active site" description="Proton acceptor" evidence="1">
    <location>
        <position position="140"/>
    </location>
</feature>
<feature type="active site" description="Proton acceptor" evidence="1">
    <location>
        <position position="178"/>
    </location>
</feature>
<feature type="binding site" evidence="1">
    <location>
        <begin position="10"/>
        <end position="11"/>
    </location>
    <ligand>
        <name>NADP(+)</name>
        <dbReference type="ChEBI" id="CHEBI:58349"/>
    </ligand>
</feature>
<feature type="binding site" evidence="1">
    <location>
        <begin position="31"/>
        <end position="32"/>
    </location>
    <ligand>
        <name>NADP(+)</name>
        <dbReference type="ChEBI" id="CHEBI:58349"/>
    </ligand>
</feature>
<feature type="binding site" evidence="1">
    <location>
        <position position="38"/>
    </location>
    <ligand>
        <name>NADP(+)</name>
        <dbReference type="ChEBI" id="CHEBI:58349"/>
    </ligand>
</feature>
<feature type="binding site" evidence="1">
    <location>
        <position position="53"/>
    </location>
    <ligand>
        <name>NADP(+)</name>
        <dbReference type="ChEBI" id="CHEBI:58349"/>
    </ligand>
</feature>
<feature type="binding site" evidence="1">
    <location>
        <begin position="75"/>
        <end position="79"/>
    </location>
    <ligand>
        <name>NADP(+)</name>
        <dbReference type="ChEBI" id="CHEBI:58349"/>
    </ligand>
</feature>
<feature type="binding site" evidence="1">
    <location>
        <position position="92"/>
    </location>
    <ligand>
        <name>NADP(+)</name>
        <dbReference type="ChEBI" id="CHEBI:58349"/>
    </ligand>
</feature>
<feature type="binding site" evidence="1">
    <location>
        <position position="144"/>
    </location>
    <ligand>
        <name>NADP(+)</name>
        <dbReference type="ChEBI" id="CHEBI:58349"/>
    </ligand>
</feature>
<feature type="binding site" evidence="1">
    <location>
        <position position="169"/>
    </location>
    <ligand>
        <name>substrate</name>
    </ligand>
</feature>
<feature type="binding site" evidence="1">
    <location>
        <position position="170"/>
    </location>
    <ligand>
        <name>NADP(+)</name>
        <dbReference type="ChEBI" id="CHEBI:58349"/>
    </ligand>
</feature>
<feature type="binding site" evidence="1">
    <location>
        <position position="178"/>
    </location>
    <ligand>
        <name>NADP(+)</name>
        <dbReference type="ChEBI" id="CHEBI:58349"/>
    </ligand>
</feature>
<feature type="binding site" evidence="1">
    <location>
        <position position="180"/>
    </location>
    <ligand>
        <name>substrate</name>
    </ligand>
</feature>
<feature type="binding site" evidence="1">
    <location>
        <position position="187"/>
    </location>
    <ligand>
        <name>substrate</name>
    </ligand>
</feature>
<feature type="binding site" evidence="1">
    <location>
        <begin position="201"/>
        <end position="204"/>
    </location>
    <ligand>
        <name>substrate</name>
    </ligand>
</feature>
<feature type="binding site" evidence="1">
    <location>
        <position position="209"/>
    </location>
    <ligand>
        <name>substrate</name>
    </ligand>
</feature>
<feature type="binding site" evidence="1">
    <location>
        <position position="272"/>
    </location>
    <ligand>
        <name>substrate</name>
    </ligand>
</feature>
<name>HLDD_SALPK</name>
<comment type="function">
    <text evidence="1">Catalyzes the interconversion between ADP-D-glycero-beta-D-manno-heptose and ADP-L-glycero-beta-D-manno-heptose via an epimerization at carbon 6 of the heptose.</text>
</comment>
<comment type="catalytic activity">
    <reaction evidence="1">
        <text>ADP-D-glycero-beta-D-manno-heptose = ADP-L-glycero-beta-D-manno-heptose</text>
        <dbReference type="Rhea" id="RHEA:17577"/>
        <dbReference type="ChEBI" id="CHEBI:59967"/>
        <dbReference type="ChEBI" id="CHEBI:61506"/>
        <dbReference type="EC" id="5.1.3.20"/>
    </reaction>
</comment>
<comment type="cofactor">
    <cofactor evidence="1">
        <name>NADP(+)</name>
        <dbReference type="ChEBI" id="CHEBI:58349"/>
    </cofactor>
    <text evidence="1">Binds 1 NADP(+) per subunit.</text>
</comment>
<comment type="pathway">
    <text evidence="1">Nucleotide-sugar biosynthesis; ADP-L-glycero-beta-D-manno-heptose biosynthesis; ADP-L-glycero-beta-D-manno-heptose from D-glycero-beta-D-manno-heptose 7-phosphate: step 4/4.</text>
</comment>
<comment type="subunit">
    <text evidence="1">Homopentamer.</text>
</comment>
<comment type="domain">
    <text evidence="1">Contains a large N-terminal NADP-binding domain, and a smaller C-terminal substrate-binding domain.</text>
</comment>
<comment type="similarity">
    <text evidence="1">Belongs to the NAD(P)-dependent epimerase/dehydratase family. HldD subfamily.</text>
</comment>
<gene>
    <name evidence="1" type="primary">hldD</name>
    <name type="ordered locus">SSPA3325</name>
</gene>
<proteinExistence type="inferred from homology"/>
<protein>
    <recommendedName>
        <fullName evidence="1">ADP-L-glycero-D-manno-heptose-6-epimerase</fullName>
        <ecNumber evidence="1">5.1.3.20</ecNumber>
    </recommendedName>
    <alternativeName>
        <fullName evidence="1">ADP-L-glycero-beta-D-manno-heptose-6-epimerase</fullName>
        <shortName evidence="1">ADP-glyceromanno-heptose 6-epimerase</shortName>
        <shortName evidence="1">ADP-hep 6-epimerase</shortName>
        <shortName evidence="1">AGME</shortName>
    </alternativeName>
</protein>
<reference key="1">
    <citation type="journal article" date="2009" name="BMC Genomics">
        <title>Pseudogene accumulation in the evolutionary histories of Salmonella enterica serovars Paratyphi A and Typhi.</title>
        <authorList>
            <person name="Holt K.E."/>
            <person name="Thomson N.R."/>
            <person name="Wain J."/>
            <person name="Langridge G.C."/>
            <person name="Hasan R."/>
            <person name="Bhutta Z.A."/>
            <person name="Quail M.A."/>
            <person name="Norbertczak H."/>
            <person name="Walker D."/>
            <person name="Simmonds M."/>
            <person name="White B."/>
            <person name="Bason N."/>
            <person name="Mungall K."/>
            <person name="Dougan G."/>
            <person name="Parkhill J."/>
        </authorList>
    </citation>
    <scope>NUCLEOTIDE SEQUENCE [LARGE SCALE GENOMIC DNA]</scope>
    <source>
        <strain>AKU_12601</strain>
    </source>
</reference>
<keyword id="KW-0119">Carbohydrate metabolism</keyword>
<keyword id="KW-0413">Isomerase</keyword>
<keyword id="KW-0521">NADP</keyword>